<reference key="1">
    <citation type="journal article" date="2007" name="Nat. Biotechnol.">
        <title>Genome sequencing and analysis of the versatile cell factory Aspergillus niger CBS 513.88.</title>
        <authorList>
            <person name="Pel H.J."/>
            <person name="de Winde J.H."/>
            <person name="Archer D.B."/>
            <person name="Dyer P.S."/>
            <person name="Hofmann G."/>
            <person name="Schaap P.J."/>
            <person name="Turner G."/>
            <person name="de Vries R.P."/>
            <person name="Albang R."/>
            <person name="Albermann K."/>
            <person name="Andersen M.R."/>
            <person name="Bendtsen J.D."/>
            <person name="Benen J.A.E."/>
            <person name="van den Berg M."/>
            <person name="Breestraat S."/>
            <person name="Caddick M.X."/>
            <person name="Contreras R."/>
            <person name="Cornell M."/>
            <person name="Coutinho P.M."/>
            <person name="Danchin E.G.J."/>
            <person name="Debets A.J.M."/>
            <person name="Dekker P."/>
            <person name="van Dijck P.W.M."/>
            <person name="van Dijk A."/>
            <person name="Dijkhuizen L."/>
            <person name="Driessen A.J.M."/>
            <person name="d'Enfert C."/>
            <person name="Geysens S."/>
            <person name="Goosen C."/>
            <person name="Groot G.S.P."/>
            <person name="de Groot P.W.J."/>
            <person name="Guillemette T."/>
            <person name="Henrissat B."/>
            <person name="Herweijer M."/>
            <person name="van den Hombergh J.P.T.W."/>
            <person name="van den Hondel C.A.M.J.J."/>
            <person name="van der Heijden R.T.J.M."/>
            <person name="van der Kaaij R.M."/>
            <person name="Klis F.M."/>
            <person name="Kools H.J."/>
            <person name="Kubicek C.P."/>
            <person name="van Kuyk P.A."/>
            <person name="Lauber J."/>
            <person name="Lu X."/>
            <person name="van der Maarel M.J.E.C."/>
            <person name="Meulenberg R."/>
            <person name="Menke H."/>
            <person name="Mortimer M.A."/>
            <person name="Nielsen J."/>
            <person name="Oliver S.G."/>
            <person name="Olsthoorn M."/>
            <person name="Pal K."/>
            <person name="van Peij N.N.M.E."/>
            <person name="Ram A.F.J."/>
            <person name="Rinas U."/>
            <person name="Roubos J.A."/>
            <person name="Sagt C.M.J."/>
            <person name="Schmoll M."/>
            <person name="Sun J."/>
            <person name="Ussery D."/>
            <person name="Varga J."/>
            <person name="Vervecken W."/>
            <person name="van de Vondervoort P.J.J."/>
            <person name="Wedler H."/>
            <person name="Woesten H.A.B."/>
            <person name="Zeng A.-P."/>
            <person name="van Ooyen A.J.J."/>
            <person name="Visser J."/>
            <person name="Stam H."/>
        </authorList>
    </citation>
    <scope>NUCLEOTIDE SEQUENCE [LARGE SCALE GENOMIC DNA]</scope>
    <source>
        <strain>ATCC MYA-4892 / CBS 513.88 / FGSC A1513</strain>
    </source>
</reference>
<accession>A2QYU7</accession>
<comment type="function">
    <text evidence="1">Involved in degradation of plant cell walls. Hydrolyzes the feruloyl-arabinose ester bond in arabinoxylans, and the feruloyl-galactose ester bond in pectin. Active against paranitrophenyl-acetate, methyl ferulate and wheat arabinoxylan (By similarity).</text>
</comment>
<comment type="catalytic activity">
    <reaction>
        <text>feruloyl-polysaccharide + H2O = ferulate + polysaccharide.</text>
        <dbReference type="EC" id="3.1.1.73"/>
    </reaction>
</comment>
<comment type="subcellular location">
    <subcellularLocation>
        <location evidence="1">Secreted</location>
    </subcellularLocation>
</comment>
<comment type="similarity">
    <text evidence="3">Belongs to the faeC family.</text>
</comment>
<keyword id="KW-0119">Carbohydrate metabolism</keyword>
<keyword id="KW-0378">Hydrolase</keyword>
<keyword id="KW-0624">Polysaccharide degradation</keyword>
<keyword id="KW-1185">Reference proteome</keyword>
<keyword id="KW-0964">Secreted</keyword>
<keyword id="KW-0719">Serine esterase</keyword>
<keyword id="KW-0732">Signal</keyword>
<keyword id="KW-0858">Xylan degradation</keyword>
<name>FAEC_ASPNC</name>
<dbReference type="EC" id="3.1.1.73"/>
<dbReference type="EMBL" id="AM270264">
    <property type="protein sequence ID" value="CAK41096.1"/>
    <property type="molecule type" value="Genomic_DNA"/>
</dbReference>
<dbReference type="RefSeq" id="XP_001395336.1">
    <property type="nucleotide sequence ID" value="XM_001395299.1"/>
</dbReference>
<dbReference type="SMR" id="A2QYU7"/>
<dbReference type="ESTHER" id="aspnc-faec">
    <property type="family name" value="FaeC"/>
</dbReference>
<dbReference type="EnsemblFungi" id="CAK41096">
    <property type="protein sequence ID" value="CAK41096"/>
    <property type="gene ID" value="An12g02550"/>
</dbReference>
<dbReference type="GeneID" id="4985606"/>
<dbReference type="KEGG" id="ang:An12g02550"/>
<dbReference type="VEuPathDB" id="FungiDB:An12g02550"/>
<dbReference type="HOGENOM" id="CLU_027551_2_0_1"/>
<dbReference type="Proteomes" id="UP000006706">
    <property type="component" value="Chromosome 3L"/>
</dbReference>
<dbReference type="GO" id="GO:0005576">
    <property type="term" value="C:extracellular region"/>
    <property type="evidence" value="ECO:0007669"/>
    <property type="project" value="UniProtKB-SubCell"/>
</dbReference>
<dbReference type="GO" id="GO:0030600">
    <property type="term" value="F:feruloyl esterase activity"/>
    <property type="evidence" value="ECO:0007669"/>
    <property type="project" value="UniProtKB-EC"/>
</dbReference>
<dbReference type="GO" id="GO:0045493">
    <property type="term" value="P:xylan catabolic process"/>
    <property type="evidence" value="ECO:0007669"/>
    <property type="project" value="UniProtKB-KW"/>
</dbReference>
<dbReference type="Gene3D" id="3.40.50.1820">
    <property type="entry name" value="alpha/beta hydrolase"/>
    <property type="match status" value="1"/>
</dbReference>
<dbReference type="InterPro" id="IPR029058">
    <property type="entry name" value="AB_hydrolase_fold"/>
</dbReference>
<dbReference type="InterPro" id="IPR043595">
    <property type="entry name" value="FaeB/C/D"/>
</dbReference>
<dbReference type="PANTHER" id="PTHR38050">
    <property type="match status" value="1"/>
</dbReference>
<dbReference type="PANTHER" id="PTHR38050:SF1">
    <property type="entry name" value="FERULOYL ESTERASE C"/>
    <property type="match status" value="1"/>
</dbReference>
<dbReference type="SUPFAM" id="SSF53474">
    <property type="entry name" value="alpha/beta-Hydrolases"/>
    <property type="match status" value="1"/>
</dbReference>
<proteinExistence type="inferred from homology"/>
<evidence type="ECO:0000250" key="1"/>
<evidence type="ECO:0000255" key="2"/>
<evidence type="ECO:0000305" key="3"/>
<sequence length="270" mass="28588">MTRSIFIHTLLALSALTSVHGANSPGCGKNPTLANGVHQINGREYTLKIPDDYDANNPYHLIFGLHWRGGNMDNVVSGDSIQPWYGLESRAQGSAIFIAPNGLNAGWANTNGEDVAFIDAIMEQVESDLCVDQSSRFATGFSWGGGMSYSLACSRAKEFRAVSVLSGGVISGCDGGNDPIAYLGIHGINDPVLPFDGGVELAERFVGNNGCQPASIEKPQSGSNGWKRTDFYGCSKPVSFIAYDGGHDGAPLGVQSSLAPDATWEFFMAA</sequence>
<feature type="signal peptide" evidence="2">
    <location>
        <begin position="1"/>
        <end position="21"/>
    </location>
</feature>
<feature type="chain" id="PRO_5000220706" description="Probable feruloyl esterase C">
    <location>
        <begin position="22"/>
        <end position="270"/>
    </location>
</feature>
<protein>
    <recommendedName>
        <fullName>Probable feruloyl esterase C</fullName>
        <ecNumber>3.1.1.73</ecNumber>
    </recommendedName>
    <alternativeName>
        <fullName>Ferulic acid esterase C</fullName>
    </alternativeName>
</protein>
<organism>
    <name type="scientific">Aspergillus niger (strain ATCC MYA-4892 / CBS 513.88 / FGSC A1513)</name>
    <dbReference type="NCBI Taxonomy" id="425011"/>
    <lineage>
        <taxon>Eukaryota</taxon>
        <taxon>Fungi</taxon>
        <taxon>Dikarya</taxon>
        <taxon>Ascomycota</taxon>
        <taxon>Pezizomycotina</taxon>
        <taxon>Eurotiomycetes</taxon>
        <taxon>Eurotiomycetidae</taxon>
        <taxon>Eurotiales</taxon>
        <taxon>Aspergillaceae</taxon>
        <taxon>Aspergillus</taxon>
        <taxon>Aspergillus subgen. Circumdati</taxon>
    </lineage>
</organism>
<gene>
    <name type="primary">faeC</name>
    <name type="ORF">An12g02550</name>
</gene>